<keyword id="KW-0067">ATP-binding</keyword>
<keyword id="KW-0436">Ligase</keyword>
<keyword id="KW-0460">Magnesium</keyword>
<keyword id="KW-0464">Manganese</keyword>
<keyword id="KW-0479">Metal-binding</keyword>
<keyword id="KW-0547">Nucleotide-binding</keyword>
<keyword id="KW-0658">Purine biosynthesis</keyword>
<keyword id="KW-1185">Reference proteome</keyword>
<feature type="chain" id="PRO_0000151433" description="Phosphoribosylamine--glycine ligase">
    <location>
        <begin position="1"/>
        <end position="425"/>
    </location>
</feature>
<feature type="domain" description="ATP-grasp" evidence="2">
    <location>
        <begin position="109"/>
        <end position="315"/>
    </location>
</feature>
<feature type="binding site" evidence="2">
    <location>
        <begin position="135"/>
        <end position="195"/>
    </location>
    <ligand>
        <name>ATP</name>
        <dbReference type="ChEBI" id="CHEBI:30616"/>
    </ligand>
</feature>
<feature type="binding site" evidence="2">
    <location>
        <position position="285"/>
    </location>
    <ligand>
        <name>Mg(2+)</name>
        <dbReference type="ChEBI" id="CHEBI:18420"/>
    </ligand>
</feature>
<feature type="binding site" evidence="2">
    <location>
        <position position="287"/>
    </location>
    <ligand>
        <name>Mg(2+)</name>
        <dbReference type="ChEBI" id="CHEBI:18420"/>
    </ligand>
</feature>
<gene>
    <name evidence="2" type="primary">purD</name>
    <name type="ordered locus">alr3510</name>
</gene>
<organism>
    <name type="scientific">Nostoc sp. (strain PCC 7120 / SAG 25.82 / UTEX 2576)</name>
    <dbReference type="NCBI Taxonomy" id="103690"/>
    <lineage>
        <taxon>Bacteria</taxon>
        <taxon>Bacillati</taxon>
        <taxon>Cyanobacteriota</taxon>
        <taxon>Cyanophyceae</taxon>
        <taxon>Nostocales</taxon>
        <taxon>Nostocaceae</taxon>
        <taxon>Nostoc</taxon>
    </lineage>
</organism>
<reference key="1">
    <citation type="journal article" date="2001" name="DNA Res.">
        <title>Complete genomic sequence of the filamentous nitrogen-fixing cyanobacterium Anabaena sp. strain PCC 7120.</title>
        <authorList>
            <person name="Kaneko T."/>
            <person name="Nakamura Y."/>
            <person name="Wolk C.P."/>
            <person name="Kuritz T."/>
            <person name="Sasamoto S."/>
            <person name="Watanabe A."/>
            <person name="Iriguchi M."/>
            <person name="Ishikawa A."/>
            <person name="Kawashima K."/>
            <person name="Kimura T."/>
            <person name="Kishida Y."/>
            <person name="Kohara M."/>
            <person name="Matsumoto M."/>
            <person name="Matsuno A."/>
            <person name="Muraki A."/>
            <person name="Nakazaki N."/>
            <person name="Shimpo S."/>
            <person name="Sugimoto M."/>
            <person name="Takazawa M."/>
            <person name="Yamada M."/>
            <person name="Yasuda M."/>
            <person name="Tabata S."/>
        </authorList>
    </citation>
    <scope>NUCLEOTIDE SEQUENCE [LARGE SCALE GENOMIC DNA]</scope>
    <source>
        <strain>PCC 7120 / SAG 25.82 / UTEX 2576</strain>
    </source>
</reference>
<dbReference type="EC" id="6.3.4.13" evidence="2"/>
<dbReference type="EMBL" id="BA000019">
    <property type="protein sequence ID" value="BAB75209.1"/>
    <property type="molecule type" value="Genomic_DNA"/>
</dbReference>
<dbReference type="PIR" id="AG2244">
    <property type="entry name" value="AG2244"/>
</dbReference>
<dbReference type="RefSeq" id="WP_010997660.1">
    <property type="nucleotide sequence ID" value="NZ_RSCN01000015.1"/>
</dbReference>
<dbReference type="SMR" id="Q8YRD8"/>
<dbReference type="STRING" id="103690.gene:10495550"/>
<dbReference type="KEGG" id="ana:alr3510"/>
<dbReference type="eggNOG" id="COG0151">
    <property type="taxonomic scope" value="Bacteria"/>
</dbReference>
<dbReference type="OrthoDB" id="9807240at2"/>
<dbReference type="UniPathway" id="UPA00074">
    <property type="reaction ID" value="UER00125"/>
</dbReference>
<dbReference type="Proteomes" id="UP000002483">
    <property type="component" value="Chromosome"/>
</dbReference>
<dbReference type="GO" id="GO:0005524">
    <property type="term" value="F:ATP binding"/>
    <property type="evidence" value="ECO:0007669"/>
    <property type="project" value="UniProtKB-KW"/>
</dbReference>
<dbReference type="GO" id="GO:0046872">
    <property type="term" value="F:metal ion binding"/>
    <property type="evidence" value="ECO:0007669"/>
    <property type="project" value="UniProtKB-KW"/>
</dbReference>
<dbReference type="GO" id="GO:0004637">
    <property type="term" value="F:phosphoribosylamine-glycine ligase activity"/>
    <property type="evidence" value="ECO:0007669"/>
    <property type="project" value="UniProtKB-UniRule"/>
</dbReference>
<dbReference type="GO" id="GO:0006189">
    <property type="term" value="P:'de novo' IMP biosynthetic process"/>
    <property type="evidence" value="ECO:0007669"/>
    <property type="project" value="UniProtKB-UniRule"/>
</dbReference>
<dbReference type="GO" id="GO:0009113">
    <property type="term" value="P:purine nucleobase biosynthetic process"/>
    <property type="evidence" value="ECO:0007669"/>
    <property type="project" value="InterPro"/>
</dbReference>
<dbReference type="FunFam" id="3.40.50.20:FF:000006">
    <property type="entry name" value="Phosphoribosylamine--glycine ligase, chloroplastic"/>
    <property type="match status" value="1"/>
</dbReference>
<dbReference type="FunFam" id="3.30.470.20:FF:000018">
    <property type="entry name" value="Trifunctional purine biosynthetic protein adenosine-3"/>
    <property type="match status" value="1"/>
</dbReference>
<dbReference type="FunFam" id="3.90.600.10:FF:000001">
    <property type="entry name" value="Trifunctional purine biosynthetic protein adenosine-3"/>
    <property type="match status" value="1"/>
</dbReference>
<dbReference type="Gene3D" id="3.40.50.20">
    <property type="match status" value="1"/>
</dbReference>
<dbReference type="Gene3D" id="3.30.1490.20">
    <property type="entry name" value="ATP-grasp fold, A domain"/>
    <property type="match status" value="1"/>
</dbReference>
<dbReference type="Gene3D" id="3.30.470.20">
    <property type="entry name" value="ATP-grasp fold, B domain"/>
    <property type="match status" value="1"/>
</dbReference>
<dbReference type="Gene3D" id="3.90.600.10">
    <property type="entry name" value="Phosphoribosylglycinamide synthetase, C-terminal domain"/>
    <property type="match status" value="1"/>
</dbReference>
<dbReference type="HAMAP" id="MF_00138">
    <property type="entry name" value="GARS"/>
    <property type="match status" value="1"/>
</dbReference>
<dbReference type="InterPro" id="IPR011761">
    <property type="entry name" value="ATP-grasp"/>
</dbReference>
<dbReference type="InterPro" id="IPR013815">
    <property type="entry name" value="ATP_grasp_subdomain_1"/>
</dbReference>
<dbReference type="InterPro" id="IPR016185">
    <property type="entry name" value="PreATP-grasp_dom_sf"/>
</dbReference>
<dbReference type="InterPro" id="IPR020561">
    <property type="entry name" value="PRibGlycinamid_synth_ATP-grasp"/>
</dbReference>
<dbReference type="InterPro" id="IPR000115">
    <property type="entry name" value="PRibGlycinamide_synth"/>
</dbReference>
<dbReference type="InterPro" id="IPR020560">
    <property type="entry name" value="PRibGlycinamide_synth_C-dom"/>
</dbReference>
<dbReference type="InterPro" id="IPR037123">
    <property type="entry name" value="PRibGlycinamide_synth_C_sf"/>
</dbReference>
<dbReference type="InterPro" id="IPR020559">
    <property type="entry name" value="PRibGlycinamide_synth_CS"/>
</dbReference>
<dbReference type="InterPro" id="IPR020562">
    <property type="entry name" value="PRibGlycinamide_synth_N"/>
</dbReference>
<dbReference type="InterPro" id="IPR011054">
    <property type="entry name" value="Rudment_hybrid_motif"/>
</dbReference>
<dbReference type="NCBIfam" id="TIGR00877">
    <property type="entry name" value="purD"/>
    <property type="match status" value="1"/>
</dbReference>
<dbReference type="PANTHER" id="PTHR43472">
    <property type="entry name" value="PHOSPHORIBOSYLAMINE--GLYCINE LIGASE"/>
    <property type="match status" value="1"/>
</dbReference>
<dbReference type="PANTHER" id="PTHR43472:SF1">
    <property type="entry name" value="PHOSPHORIBOSYLAMINE--GLYCINE LIGASE, CHLOROPLASTIC"/>
    <property type="match status" value="1"/>
</dbReference>
<dbReference type="Pfam" id="PF01071">
    <property type="entry name" value="GARS_A"/>
    <property type="match status" value="1"/>
</dbReference>
<dbReference type="Pfam" id="PF02843">
    <property type="entry name" value="GARS_C"/>
    <property type="match status" value="1"/>
</dbReference>
<dbReference type="Pfam" id="PF02844">
    <property type="entry name" value="GARS_N"/>
    <property type="match status" value="1"/>
</dbReference>
<dbReference type="SMART" id="SM01209">
    <property type="entry name" value="GARS_A"/>
    <property type="match status" value="1"/>
</dbReference>
<dbReference type="SMART" id="SM01210">
    <property type="entry name" value="GARS_C"/>
    <property type="match status" value="1"/>
</dbReference>
<dbReference type="SUPFAM" id="SSF56059">
    <property type="entry name" value="Glutathione synthetase ATP-binding domain-like"/>
    <property type="match status" value="1"/>
</dbReference>
<dbReference type="SUPFAM" id="SSF52440">
    <property type="entry name" value="PreATP-grasp domain"/>
    <property type="match status" value="1"/>
</dbReference>
<dbReference type="SUPFAM" id="SSF51246">
    <property type="entry name" value="Rudiment single hybrid motif"/>
    <property type="match status" value="1"/>
</dbReference>
<dbReference type="PROSITE" id="PS50975">
    <property type="entry name" value="ATP_GRASP"/>
    <property type="match status" value="1"/>
</dbReference>
<dbReference type="PROSITE" id="PS00184">
    <property type="entry name" value="GARS"/>
    <property type="match status" value="1"/>
</dbReference>
<sequence>MKVLVVGNGGREHALAWKLLQSPQIEQVACVPGNGGTATLARCQNVSLAVDDFEGISQYALNQGFSLVVVGPEVPLAKGITDYLQEKGLMVFGPSRAGAQIEASKAWAKALMQEAGIPTAKAAVFTEAAAAKSYIQAQGAPIVVKADGLAAGKGVTVATTIEQAQSAIDAIFQGQFGSAGEFVVIEECLTGQEVSVLALTDGLTIRPLLPAQDHKRIGEGDTGENTGGMGAYAPAPIATPELMALVQTEVLERAIATLQSKGIDYRGVLYAGLMITPNGDFKVLEFNCRFGDPETQVILPLLATPLEELILACVQQRLGELPPIAWQGGASATVVAASGGYPGDYEKGQVITGIPQAEATGATVFHAGTKLNAQQQIVTDGGRVLNVTGIGENFQQALAQAYTGIKAIDFSGIYYRRDIGYRVNS</sequence>
<accession>Q8YRD8</accession>
<comment type="catalytic activity">
    <reaction evidence="2">
        <text>5-phospho-beta-D-ribosylamine + glycine + ATP = N(1)-(5-phospho-beta-D-ribosyl)glycinamide + ADP + phosphate + H(+)</text>
        <dbReference type="Rhea" id="RHEA:17453"/>
        <dbReference type="ChEBI" id="CHEBI:15378"/>
        <dbReference type="ChEBI" id="CHEBI:30616"/>
        <dbReference type="ChEBI" id="CHEBI:43474"/>
        <dbReference type="ChEBI" id="CHEBI:57305"/>
        <dbReference type="ChEBI" id="CHEBI:58681"/>
        <dbReference type="ChEBI" id="CHEBI:143788"/>
        <dbReference type="ChEBI" id="CHEBI:456216"/>
        <dbReference type="EC" id="6.3.4.13"/>
    </reaction>
</comment>
<comment type="cofactor">
    <cofactor evidence="1">
        <name>Mg(2+)</name>
        <dbReference type="ChEBI" id="CHEBI:18420"/>
    </cofactor>
    <cofactor evidence="1">
        <name>Mn(2+)</name>
        <dbReference type="ChEBI" id="CHEBI:29035"/>
    </cofactor>
    <text evidence="1">Binds 1 Mg(2+) or Mn(2+) ion per subunit.</text>
</comment>
<comment type="pathway">
    <text evidence="2">Purine metabolism; IMP biosynthesis via de novo pathway; N(1)-(5-phospho-D-ribosyl)glycinamide from 5-phospho-alpha-D-ribose 1-diphosphate: step 2/2.</text>
</comment>
<comment type="similarity">
    <text evidence="2">Belongs to the GARS family.</text>
</comment>
<protein>
    <recommendedName>
        <fullName evidence="2">Phosphoribosylamine--glycine ligase</fullName>
        <ecNumber evidence="2">6.3.4.13</ecNumber>
    </recommendedName>
    <alternativeName>
        <fullName evidence="2">GARS</fullName>
    </alternativeName>
    <alternativeName>
        <fullName evidence="2">Glycinamide ribonucleotide synthetase</fullName>
    </alternativeName>
    <alternativeName>
        <fullName evidence="2">Phosphoribosylglycinamide synthetase</fullName>
    </alternativeName>
</protein>
<evidence type="ECO:0000250" key="1"/>
<evidence type="ECO:0000255" key="2">
    <source>
        <dbReference type="HAMAP-Rule" id="MF_00138"/>
    </source>
</evidence>
<name>PUR2_NOSS1</name>
<proteinExistence type="inferred from homology"/>